<name>GREA_MACCJ</name>
<dbReference type="EMBL" id="AP009484">
    <property type="protein sequence ID" value="BAH17956.1"/>
    <property type="molecule type" value="Genomic_DNA"/>
</dbReference>
<dbReference type="RefSeq" id="WP_012657154.1">
    <property type="nucleotide sequence ID" value="NC_011999.1"/>
</dbReference>
<dbReference type="SMR" id="B9E6Y8"/>
<dbReference type="STRING" id="458233.MCCL_1249"/>
<dbReference type="GeneID" id="61128854"/>
<dbReference type="KEGG" id="mcl:MCCL_1249"/>
<dbReference type="eggNOG" id="COG0782">
    <property type="taxonomic scope" value="Bacteria"/>
</dbReference>
<dbReference type="HOGENOM" id="CLU_101379_2_1_9"/>
<dbReference type="OrthoDB" id="9808774at2"/>
<dbReference type="Proteomes" id="UP000001383">
    <property type="component" value="Chromosome"/>
</dbReference>
<dbReference type="GO" id="GO:0003677">
    <property type="term" value="F:DNA binding"/>
    <property type="evidence" value="ECO:0007669"/>
    <property type="project" value="UniProtKB-UniRule"/>
</dbReference>
<dbReference type="GO" id="GO:0070063">
    <property type="term" value="F:RNA polymerase binding"/>
    <property type="evidence" value="ECO:0007669"/>
    <property type="project" value="InterPro"/>
</dbReference>
<dbReference type="GO" id="GO:0006354">
    <property type="term" value="P:DNA-templated transcription elongation"/>
    <property type="evidence" value="ECO:0007669"/>
    <property type="project" value="TreeGrafter"/>
</dbReference>
<dbReference type="GO" id="GO:0032784">
    <property type="term" value="P:regulation of DNA-templated transcription elongation"/>
    <property type="evidence" value="ECO:0007669"/>
    <property type="project" value="UniProtKB-UniRule"/>
</dbReference>
<dbReference type="FunFam" id="1.10.287.180:FF:000001">
    <property type="entry name" value="Transcription elongation factor GreA"/>
    <property type="match status" value="1"/>
</dbReference>
<dbReference type="FunFam" id="3.10.50.30:FF:000001">
    <property type="entry name" value="Transcription elongation factor GreA"/>
    <property type="match status" value="1"/>
</dbReference>
<dbReference type="Gene3D" id="3.10.50.30">
    <property type="entry name" value="Transcription elongation factor, GreA/GreB, C-terminal domain"/>
    <property type="match status" value="1"/>
</dbReference>
<dbReference type="Gene3D" id="1.10.287.180">
    <property type="entry name" value="Transcription elongation factor, GreA/GreB, N-terminal domain"/>
    <property type="match status" value="1"/>
</dbReference>
<dbReference type="HAMAP" id="MF_00105">
    <property type="entry name" value="GreA_GreB"/>
    <property type="match status" value="1"/>
</dbReference>
<dbReference type="InterPro" id="IPR036953">
    <property type="entry name" value="GreA/GreB_C_sf"/>
</dbReference>
<dbReference type="InterPro" id="IPR018151">
    <property type="entry name" value="TF_GreA/GreB_CS"/>
</dbReference>
<dbReference type="InterPro" id="IPR006359">
    <property type="entry name" value="Tscrpt_elong_fac_GreA"/>
</dbReference>
<dbReference type="InterPro" id="IPR028624">
    <property type="entry name" value="Tscrpt_elong_fac_GreA/B"/>
</dbReference>
<dbReference type="InterPro" id="IPR001437">
    <property type="entry name" value="Tscrpt_elong_fac_GreA/B_C"/>
</dbReference>
<dbReference type="InterPro" id="IPR023459">
    <property type="entry name" value="Tscrpt_elong_fac_GreA/B_fam"/>
</dbReference>
<dbReference type="InterPro" id="IPR022691">
    <property type="entry name" value="Tscrpt_elong_fac_GreA/B_N"/>
</dbReference>
<dbReference type="InterPro" id="IPR036805">
    <property type="entry name" value="Tscrpt_elong_fac_GreA/B_N_sf"/>
</dbReference>
<dbReference type="NCBIfam" id="TIGR01462">
    <property type="entry name" value="greA"/>
    <property type="match status" value="1"/>
</dbReference>
<dbReference type="NCBIfam" id="NF001261">
    <property type="entry name" value="PRK00226.1-2"/>
    <property type="match status" value="1"/>
</dbReference>
<dbReference type="NCBIfam" id="NF001263">
    <property type="entry name" value="PRK00226.1-4"/>
    <property type="match status" value="1"/>
</dbReference>
<dbReference type="PANTHER" id="PTHR30437">
    <property type="entry name" value="TRANSCRIPTION ELONGATION FACTOR GREA"/>
    <property type="match status" value="1"/>
</dbReference>
<dbReference type="PANTHER" id="PTHR30437:SF4">
    <property type="entry name" value="TRANSCRIPTION ELONGATION FACTOR GREA"/>
    <property type="match status" value="1"/>
</dbReference>
<dbReference type="Pfam" id="PF01272">
    <property type="entry name" value="GreA_GreB"/>
    <property type="match status" value="1"/>
</dbReference>
<dbReference type="Pfam" id="PF03449">
    <property type="entry name" value="GreA_GreB_N"/>
    <property type="match status" value="1"/>
</dbReference>
<dbReference type="PIRSF" id="PIRSF006092">
    <property type="entry name" value="GreA_GreB"/>
    <property type="match status" value="1"/>
</dbReference>
<dbReference type="SUPFAM" id="SSF54534">
    <property type="entry name" value="FKBP-like"/>
    <property type="match status" value="1"/>
</dbReference>
<dbReference type="SUPFAM" id="SSF46557">
    <property type="entry name" value="GreA transcript cleavage protein, N-terminal domain"/>
    <property type="match status" value="1"/>
</dbReference>
<dbReference type="PROSITE" id="PS00829">
    <property type="entry name" value="GREAB_1"/>
    <property type="match status" value="1"/>
</dbReference>
<dbReference type="PROSITE" id="PS00830">
    <property type="entry name" value="GREAB_2"/>
    <property type="match status" value="1"/>
</dbReference>
<feature type="chain" id="PRO_1000190218" description="Transcription elongation factor GreA">
    <location>
        <begin position="1"/>
        <end position="158"/>
    </location>
</feature>
<reference key="1">
    <citation type="journal article" date="2009" name="J. Bacteriol.">
        <title>Complete genome sequence of Macrococcus caseolyticus strain JCSCS5402, reflecting the ancestral genome of the human-pathogenic staphylococci.</title>
        <authorList>
            <person name="Baba T."/>
            <person name="Kuwahara-Arai K."/>
            <person name="Uchiyama I."/>
            <person name="Takeuchi F."/>
            <person name="Ito T."/>
            <person name="Hiramatsu K."/>
        </authorList>
    </citation>
    <scope>NUCLEOTIDE SEQUENCE [LARGE SCALE GENOMIC DNA]</scope>
    <source>
        <strain>JCSC5402</strain>
    </source>
</reference>
<protein>
    <recommendedName>
        <fullName evidence="1">Transcription elongation factor GreA</fullName>
    </recommendedName>
    <alternativeName>
        <fullName evidence="1">Transcript cleavage factor GreA</fullName>
    </alternativeName>
</protein>
<accession>B9E6Y8</accession>
<proteinExistence type="inferred from homology"/>
<sequence>MEMQKEYPMTQEGFDKLEVELEHLKTVRRPEVVEKIKVARSFGDLSENSEYDAAKDEQGFVEQEITKIEMMLRHAVIIEDDGSKSEVQIGRTVTFAEVPGNEEESYKIVGSAEADPFEGKISNESPIAKALLGKKVGDEVNVPLPNGNEMRVKIVEIS</sequence>
<gene>
    <name evidence="1" type="primary">greA</name>
    <name type="ordered locus">MCCL_1249</name>
</gene>
<organism>
    <name type="scientific">Macrococcus caseolyticus (strain JCSC5402)</name>
    <name type="common">Macrococcoides caseolyticum</name>
    <dbReference type="NCBI Taxonomy" id="458233"/>
    <lineage>
        <taxon>Bacteria</taxon>
        <taxon>Bacillati</taxon>
        <taxon>Bacillota</taxon>
        <taxon>Bacilli</taxon>
        <taxon>Bacillales</taxon>
        <taxon>Staphylococcaceae</taxon>
        <taxon>Macrococcoides</taxon>
    </lineage>
</organism>
<evidence type="ECO:0000255" key="1">
    <source>
        <dbReference type="HAMAP-Rule" id="MF_00105"/>
    </source>
</evidence>
<keyword id="KW-0238">DNA-binding</keyword>
<keyword id="KW-1185">Reference proteome</keyword>
<keyword id="KW-0804">Transcription</keyword>
<keyword id="KW-0805">Transcription regulation</keyword>
<comment type="function">
    <text evidence="1">Necessary for efficient RNA polymerase transcription elongation past template-encoded arresting sites. The arresting sites in DNA have the property of trapping a certain fraction of elongating RNA polymerases that pass through, resulting in locked ternary complexes. Cleavage of the nascent transcript by cleavage factors such as GreA or GreB allows the resumption of elongation from the new 3'terminus. GreA releases sequences of 2 to 3 nucleotides.</text>
</comment>
<comment type="similarity">
    <text evidence="1">Belongs to the GreA/GreB family.</text>
</comment>